<comment type="function">
    <text evidence="1">Required for growth and/or survival at acidic conditions.</text>
</comment>
<comment type="subcellular location">
    <subcellularLocation>
        <location evidence="1">Periplasm</location>
    </subcellularLocation>
</comment>
<comment type="PTM">
    <text evidence="1">Proteolytic processing gives rise to the active protein.</text>
</comment>
<comment type="similarity">
    <text evidence="3">Belongs to the Asr family.</text>
</comment>
<comment type="sequence caution" evidence="3">
    <conflict type="erroneous initiation">
        <sequence resource="EMBL-CDS" id="AAO69049"/>
    </conflict>
</comment>
<comment type="sequence caution" evidence="3">
    <conflict type="erroneous initiation">
        <sequence resource="EMBL-CDS" id="CAD01829"/>
    </conflict>
</comment>
<protein>
    <recommendedName>
        <fullName>Acid shock protein</fullName>
    </recommendedName>
</protein>
<keyword id="KW-0574">Periplasm</keyword>
<keyword id="KW-0732">Signal</keyword>
<feature type="signal peptide" evidence="1">
    <location>
        <begin position="1"/>
        <end position="21"/>
    </location>
</feature>
<feature type="propeptide" id="PRO_0000269508" evidence="1">
    <location>
        <begin position="22"/>
        <end position="56"/>
    </location>
</feature>
<feature type="chain" id="PRO_0000002407" description="Acid shock protein">
    <location>
        <begin position="57"/>
        <end position="83"/>
    </location>
</feature>
<feature type="region of interest" description="Disordered" evidence="2">
    <location>
        <begin position="22"/>
        <end position="83"/>
    </location>
</feature>
<feature type="compositionally biased region" description="Low complexity" evidence="2">
    <location>
        <begin position="22"/>
        <end position="40"/>
    </location>
</feature>
<feature type="compositionally biased region" description="Basic residues" evidence="2">
    <location>
        <begin position="57"/>
        <end position="70"/>
    </location>
</feature>
<feature type="compositionally biased region" description="Low complexity" evidence="2">
    <location>
        <begin position="71"/>
        <end position="83"/>
    </location>
</feature>
<dbReference type="EMBL" id="AF405544">
    <property type="protein sequence ID" value="AAK92017.1"/>
    <property type="molecule type" value="Genomic_DNA"/>
</dbReference>
<dbReference type="EMBL" id="AL513382">
    <property type="protein sequence ID" value="CAD01829.1"/>
    <property type="status" value="ALT_INIT"/>
    <property type="molecule type" value="Genomic_DNA"/>
</dbReference>
<dbReference type="EMBL" id="AE014613">
    <property type="protein sequence ID" value="AAO69049.1"/>
    <property type="status" value="ALT_INIT"/>
    <property type="molecule type" value="Genomic_DNA"/>
</dbReference>
<dbReference type="PIR" id="AD0682">
    <property type="entry name" value="AD0682"/>
</dbReference>
<dbReference type="RefSeq" id="NP_455995.3">
    <property type="nucleotide sequence ID" value="NC_003198.1"/>
</dbReference>
<dbReference type="RefSeq" id="WP_001766314.1">
    <property type="nucleotide sequence ID" value="NZ_WSUR01000040.1"/>
</dbReference>
<dbReference type="STRING" id="220341.gene:17585519"/>
<dbReference type="KEGG" id="stt:t1405"/>
<dbReference type="KEGG" id="sty:STY1582"/>
<dbReference type="PATRIC" id="fig|220341.7.peg.1590"/>
<dbReference type="eggNOG" id="ENOG50339VJ">
    <property type="taxonomic scope" value="Bacteria"/>
</dbReference>
<dbReference type="HOGENOM" id="CLU_102486_2_1_6"/>
<dbReference type="OMA" id="KKATHTK"/>
<dbReference type="Proteomes" id="UP000000541">
    <property type="component" value="Chromosome"/>
</dbReference>
<dbReference type="Proteomes" id="UP000002670">
    <property type="component" value="Chromosome"/>
</dbReference>
<dbReference type="GO" id="GO:0042597">
    <property type="term" value="C:periplasmic space"/>
    <property type="evidence" value="ECO:0007669"/>
    <property type="project" value="UniProtKB-SubCell"/>
</dbReference>
<dbReference type="HAMAP" id="MF_00546">
    <property type="entry name" value="Asr"/>
    <property type="match status" value="1"/>
</dbReference>
<dbReference type="InterPro" id="IPR023497">
    <property type="entry name" value="Acid_shock"/>
</dbReference>
<dbReference type="NCBIfam" id="NF033636">
    <property type="entry name" value="acid_shock_Asr"/>
    <property type="match status" value="1"/>
</dbReference>
<dbReference type="Pfam" id="PF06392">
    <property type="entry name" value="Asr"/>
    <property type="match status" value="1"/>
</dbReference>
<evidence type="ECO:0000250" key="1"/>
<evidence type="ECO:0000256" key="2">
    <source>
        <dbReference type="SAM" id="MobiDB-lite"/>
    </source>
</evidence>
<evidence type="ECO:0000305" key="3"/>
<reference key="1">
    <citation type="submission" date="2001-08" db="EMBL/GenBank/DDBJ databases">
        <title>Molecular characterization of acid-inducible Asr protein of Escherichia coli.</title>
        <authorList>
            <person name="Seputiene V."/>
            <person name="Motiejunas D."/>
            <person name="Suziedelis K."/>
            <person name="Suziedeliene E."/>
        </authorList>
    </citation>
    <scope>NUCLEOTIDE SEQUENCE [GENOMIC DNA]</scope>
</reference>
<reference key="2">
    <citation type="journal article" date="2001" name="Nature">
        <title>Complete genome sequence of a multiple drug resistant Salmonella enterica serovar Typhi CT18.</title>
        <authorList>
            <person name="Parkhill J."/>
            <person name="Dougan G."/>
            <person name="James K.D."/>
            <person name="Thomson N.R."/>
            <person name="Pickard D."/>
            <person name="Wain J."/>
            <person name="Churcher C.M."/>
            <person name="Mungall K.L."/>
            <person name="Bentley S.D."/>
            <person name="Holden M.T.G."/>
            <person name="Sebaihia M."/>
            <person name="Baker S."/>
            <person name="Basham D."/>
            <person name="Brooks K."/>
            <person name="Chillingworth T."/>
            <person name="Connerton P."/>
            <person name="Cronin A."/>
            <person name="Davis P."/>
            <person name="Davies R.M."/>
            <person name="Dowd L."/>
            <person name="White N."/>
            <person name="Farrar J."/>
            <person name="Feltwell T."/>
            <person name="Hamlin N."/>
            <person name="Haque A."/>
            <person name="Hien T.T."/>
            <person name="Holroyd S."/>
            <person name="Jagels K."/>
            <person name="Krogh A."/>
            <person name="Larsen T.S."/>
            <person name="Leather S."/>
            <person name="Moule S."/>
            <person name="O'Gaora P."/>
            <person name="Parry C."/>
            <person name="Quail M.A."/>
            <person name="Rutherford K.M."/>
            <person name="Simmonds M."/>
            <person name="Skelton J."/>
            <person name="Stevens K."/>
            <person name="Whitehead S."/>
            <person name="Barrell B.G."/>
        </authorList>
    </citation>
    <scope>NUCLEOTIDE SEQUENCE [LARGE SCALE GENOMIC DNA]</scope>
    <source>
        <strain>CT18</strain>
    </source>
</reference>
<reference key="3">
    <citation type="journal article" date="2003" name="J. Bacteriol.">
        <title>Comparative genomics of Salmonella enterica serovar Typhi strains Ty2 and CT18.</title>
        <authorList>
            <person name="Deng W."/>
            <person name="Liou S.-R."/>
            <person name="Plunkett G. III"/>
            <person name="Mayhew G.F."/>
            <person name="Rose D.J."/>
            <person name="Burland V."/>
            <person name="Kodoyianni V."/>
            <person name="Schwartz D.C."/>
            <person name="Blattner F.R."/>
        </authorList>
    </citation>
    <scope>NUCLEOTIDE SEQUENCE [LARGE SCALE GENOMIC DNA]</scope>
    <source>
        <strain>ATCC 700931 / Ty2</strain>
    </source>
</reference>
<name>ASR_SALTI</name>
<accession>Q93MH4</accession>
<accession>Q8Z6X6</accession>
<organism>
    <name type="scientific">Salmonella typhi</name>
    <dbReference type="NCBI Taxonomy" id="90370"/>
    <lineage>
        <taxon>Bacteria</taxon>
        <taxon>Pseudomonadati</taxon>
        <taxon>Pseudomonadota</taxon>
        <taxon>Gammaproteobacteria</taxon>
        <taxon>Enterobacterales</taxon>
        <taxon>Enterobacteriaceae</taxon>
        <taxon>Salmonella</taxon>
    </lineage>
</organism>
<sequence length="83" mass="8633">MKKVLALVVAAAMGLSSAAFAAETATPAKTAAPAKTTQTTQHHKKQHKKTVEQKAQAAKKHQKKDGKKAPAKSTSKTTSQPAA</sequence>
<proteinExistence type="inferred from homology"/>
<gene>
    <name type="primary">asr</name>
    <name type="ordered locus">STY1582</name>
    <name type="ordered locus">t1405</name>
</gene>